<reference key="1">
    <citation type="journal article" date="1989" name="J. Mol. Evol.">
        <title>Variation in salmonid mitochondrial DNA: evolutionary constraints and mechanisms of substitution.</title>
        <authorList>
            <person name="Thomas W.K."/>
            <person name="Beckenbach A.T."/>
        </authorList>
    </citation>
    <scope>NUCLEOTIDE SEQUENCE OF 1-92</scope>
</reference>
<accession>P69306</accession>
<accession>P11630</accession>
<evidence type="ECO:0000250" key="1"/>
<evidence type="ECO:0000250" key="2">
    <source>
        <dbReference type="UniProtKB" id="P03901"/>
    </source>
</evidence>
<evidence type="ECO:0000255" key="3"/>
<evidence type="ECO:0000305" key="4"/>
<organism>
    <name type="scientific">Oncorhynchus clarkii</name>
    <name type="common">Cutthroat trout</name>
    <name type="synonym">Salmo clarkii</name>
    <dbReference type="NCBI Taxonomy" id="30962"/>
    <lineage>
        <taxon>Eukaryota</taxon>
        <taxon>Metazoa</taxon>
        <taxon>Chordata</taxon>
        <taxon>Craniata</taxon>
        <taxon>Vertebrata</taxon>
        <taxon>Euteleostomi</taxon>
        <taxon>Actinopterygii</taxon>
        <taxon>Neopterygii</taxon>
        <taxon>Teleostei</taxon>
        <taxon>Protacanthopterygii</taxon>
        <taxon>Salmoniformes</taxon>
        <taxon>Salmonidae</taxon>
        <taxon>Salmoninae</taxon>
        <taxon>Oncorhynchus</taxon>
    </lineage>
</organism>
<keyword id="KW-0249">Electron transport</keyword>
<keyword id="KW-0472">Membrane</keyword>
<keyword id="KW-0496">Mitochondrion</keyword>
<keyword id="KW-0520">NAD</keyword>
<keyword id="KW-0679">Respiratory chain</keyword>
<keyword id="KW-1278">Translocase</keyword>
<keyword id="KW-0812">Transmembrane</keyword>
<keyword id="KW-1133">Transmembrane helix</keyword>
<keyword id="KW-0813">Transport</keyword>
<keyword id="KW-0830">Ubiquinone</keyword>
<name>NU4LM_ONCCL</name>
<proteinExistence type="inferred from homology"/>
<geneLocation type="mitochondrion"/>
<feature type="chain" id="PRO_0000118455" description="NADH-ubiquinone oxidoreductase chain 4L">
    <location>
        <begin position="1"/>
        <end position="98"/>
    </location>
</feature>
<feature type="transmembrane region" description="Helical" evidence="3">
    <location>
        <begin position="1"/>
        <end position="21"/>
    </location>
</feature>
<feature type="transmembrane region" description="Helical" evidence="3">
    <location>
        <begin position="29"/>
        <end position="49"/>
    </location>
</feature>
<feature type="transmembrane region" description="Helical" evidence="3">
    <location>
        <begin position="58"/>
        <end position="78"/>
    </location>
</feature>
<dbReference type="EC" id="7.1.1.2"/>
<dbReference type="PIR" id="H30401">
    <property type="entry name" value="H30401"/>
</dbReference>
<dbReference type="SMR" id="P69306"/>
<dbReference type="GO" id="GO:0031966">
    <property type="term" value="C:mitochondrial membrane"/>
    <property type="evidence" value="ECO:0007669"/>
    <property type="project" value="UniProtKB-SubCell"/>
</dbReference>
<dbReference type="GO" id="GO:0045271">
    <property type="term" value="C:respiratory chain complex I"/>
    <property type="evidence" value="ECO:0000250"/>
    <property type="project" value="UniProtKB"/>
</dbReference>
<dbReference type="GO" id="GO:0008137">
    <property type="term" value="F:NADH dehydrogenase (ubiquinone) activity"/>
    <property type="evidence" value="ECO:0000250"/>
    <property type="project" value="UniProtKB"/>
</dbReference>
<dbReference type="GO" id="GO:0042773">
    <property type="term" value="P:ATP synthesis coupled electron transport"/>
    <property type="evidence" value="ECO:0007669"/>
    <property type="project" value="InterPro"/>
</dbReference>
<dbReference type="FunFam" id="1.10.287.3510:FF:000002">
    <property type="entry name" value="NADH-ubiquinone oxidoreductase chain 4L"/>
    <property type="match status" value="1"/>
</dbReference>
<dbReference type="Gene3D" id="1.10.287.3510">
    <property type="match status" value="1"/>
</dbReference>
<dbReference type="InterPro" id="IPR001133">
    <property type="entry name" value="NADH_UbQ_OxRdtase_chain4L/K"/>
</dbReference>
<dbReference type="InterPro" id="IPR039428">
    <property type="entry name" value="NUOK/Mnh_C1-like"/>
</dbReference>
<dbReference type="PANTHER" id="PTHR11434:SF0">
    <property type="entry name" value="NADH-UBIQUINONE OXIDOREDUCTASE CHAIN 4L"/>
    <property type="match status" value="1"/>
</dbReference>
<dbReference type="PANTHER" id="PTHR11434">
    <property type="entry name" value="NADH-UBIQUINONE OXIDOREDUCTASE SUBUNIT ND4L"/>
    <property type="match status" value="1"/>
</dbReference>
<dbReference type="Pfam" id="PF00420">
    <property type="entry name" value="Oxidored_q2"/>
    <property type="match status" value="1"/>
</dbReference>
<gene>
    <name type="primary">MT-ND4L</name>
    <name type="synonym">MTND4L</name>
    <name type="synonym">NADH4L</name>
    <name type="synonym">ND4L</name>
</gene>
<sequence>MTPVHFSFTSAFILGLMGLAFHRTHLLSALLCLEGMMLSLFIALSLWALQMEATGYSVAPMLLLAFSACEASAGLALLVATARTHGTDRLQSLNLLQC</sequence>
<protein>
    <recommendedName>
        <fullName>NADH-ubiquinone oxidoreductase chain 4L</fullName>
        <ecNumber>7.1.1.2</ecNumber>
    </recommendedName>
    <alternativeName>
        <fullName>NADH dehydrogenase subunit 4L</fullName>
    </alternativeName>
</protein>
<comment type="function">
    <text evidence="2">Core subunit of the mitochondrial membrane respiratory chain NADH dehydrogenase (Complex I) which catalyzes electron transfer from NADH through the respiratory chain, using ubiquinone as an electron acceptor. Part of the enzyme membrane arm which is embedded in the lipid bilayer and involved in proton translocation.</text>
</comment>
<comment type="catalytic activity">
    <reaction evidence="2">
        <text>a ubiquinone + NADH + 5 H(+)(in) = a ubiquinol + NAD(+) + 4 H(+)(out)</text>
        <dbReference type="Rhea" id="RHEA:29091"/>
        <dbReference type="Rhea" id="RHEA-COMP:9565"/>
        <dbReference type="Rhea" id="RHEA-COMP:9566"/>
        <dbReference type="ChEBI" id="CHEBI:15378"/>
        <dbReference type="ChEBI" id="CHEBI:16389"/>
        <dbReference type="ChEBI" id="CHEBI:17976"/>
        <dbReference type="ChEBI" id="CHEBI:57540"/>
        <dbReference type="ChEBI" id="CHEBI:57945"/>
        <dbReference type="EC" id="7.1.1.2"/>
    </reaction>
    <physiologicalReaction direction="left-to-right" evidence="2">
        <dbReference type="Rhea" id="RHEA:29092"/>
    </physiologicalReaction>
</comment>
<comment type="subcellular location">
    <subcellularLocation>
        <location evidence="1">Mitochondrion membrane</location>
        <topology evidence="1">Multi-pass membrane protein</topology>
    </subcellularLocation>
</comment>
<comment type="similarity">
    <text evidence="4">Belongs to the complex I subunit 4L family.</text>
</comment>